<comment type="subcellular location">
    <subcellularLocation>
        <location evidence="1">Mitochondrion outer membrane</location>
        <topology evidence="1">Peripheral membrane protein</topology>
    </subcellularLocation>
</comment>
<comment type="similarity">
    <text evidence="2">Belongs to the FMP52 family.</text>
</comment>
<protein>
    <recommendedName>
        <fullName>Protein FMP52-1, mitochondrial</fullName>
    </recommendedName>
</protein>
<evidence type="ECO:0000250" key="1"/>
<evidence type="ECO:0000305" key="2"/>
<proteinExistence type="inferred from homology"/>
<sequence>MSAFVLGSTGLVGLQILKVLDSSTAFKKVSTVSRRLPSVTSGKINSIEKKESEEWPAIIEKEAKDYSAFFSAFGTTRAAAGSADNFKKIDYGINYEAAKAAKAAGVETFVLVSTIGANAQSSFLYLQVKGQLEEDIIALKFPRTIILRPGILLGERETSKGLLNNLSVGVLKYLHGTPLTFLGNPIFGAEVAQIAVNAAQESFEKGDEPVVKFYEARELTELYKKL</sequence>
<gene>
    <name type="primary">FMP521</name>
    <name type="ORF">PICST_46234</name>
</gene>
<reference key="1">
    <citation type="journal article" date="2007" name="Nat. Biotechnol.">
        <title>Genome sequence of the lignocellulose-bioconverting and xylose-fermenting yeast Pichia stipitis.</title>
        <authorList>
            <person name="Jeffries T.W."/>
            <person name="Grigoriev I.V."/>
            <person name="Grimwood J."/>
            <person name="Laplaza J.M."/>
            <person name="Aerts A."/>
            <person name="Salamov A."/>
            <person name="Schmutz J."/>
            <person name="Lindquist E."/>
            <person name="Dehal P."/>
            <person name="Shapiro H."/>
            <person name="Jin Y.-S."/>
            <person name="Passoth V."/>
            <person name="Richardson P.M."/>
        </authorList>
    </citation>
    <scope>NUCLEOTIDE SEQUENCE [LARGE SCALE GENOMIC DNA]</scope>
    <source>
        <strain>ATCC 58785 / CBS 6054 / NBRC 10063 / NRRL Y-11545</strain>
    </source>
</reference>
<dbReference type="EMBL" id="CP000499">
    <property type="protein sequence ID" value="ABN67032.1"/>
    <property type="molecule type" value="Genomic_DNA"/>
</dbReference>
<dbReference type="RefSeq" id="XP_001385061.1">
    <property type="nucleotide sequence ID" value="XM_001385024.1"/>
</dbReference>
<dbReference type="SMR" id="A3LUX6"/>
<dbReference type="FunCoup" id="A3LUX6">
    <property type="interactions" value="99"/>
</dbReference>
<dbReference type="STRING" id="322104.A3LUX6"/>
<dbReference type="GeneID" id="4839491"/>
<dbReference type="KEGG" id="pic:PICST_46234"/>
<dbReference type="eggNOG" id="KOG4039">
    <property type="taxonomic scope" value="Eukaryota"/>
</dbReference>
<dbReference type="HOGENOM" id="CLU_071330_2_2_1"/>
<dbReference type="InParanoid" id="A3LUX6"/>
<dbReference type="OMA" id="CIENAKA"/>
<dbReference type="OrthoDB" id="430436at2759"/>
<dbReference type="Proteomes" id="UP000002258">
    <property type="component" value="Chromosome 5"/>
</dbReference>
<dbReference type="GO" id="GO:0005741">
    <property type="term" value="C:mitochondrial outer membrane"/>
    <property type="evidence" value="ECO:0007669"/>
    <property type="project" value="UniProtKB-SubCell"/>
</dbReference>
<dbReference type="GO" id="GO:0051170">
    <property type="term" value="P:import into nucleus"/>
    <property type="evidence" value="ECO:0007669"/>
    <property type="project" value="TreeGrafter"/>
</dbReference>
<dbReference type="FunFam" id="3.40.50.720:FF:000366">
    <property type="entry name" value="Protein FMP52, mitochondrial"/>
    <property type="match status" value="1"/>
</dbReference>
<dbReference type="Gene3D" id="3.40.50.720">
    <property type="entry name" value="NAD(P)-binding Rossmann-like Domain"/>
    <property type="match status" value="1"/>
</dbReference>
<dbReference type="InterPro" id="IPR014843">
    <property type="entry name" value="Him1/Fmp52"/>
</dbReference>
<dbReference type="InterPro" id="IPR036291">
    <property type="entry name" value="NAD(P)-bd_dom_sf"/>
</dbReference>
<dbReference type="PANTHER" id="PTHR14097">
    <property type="entry name" value="OXIDOREDUCTASE HTATIP2"/>
    <property type="match status" value="1"/>
</dbReference>
<dbReference type="PANTHER" id="PTHR14097:SF7">
    <property type="entry name" value="OXIDOREDUCTASE HTATIP2"/>
    <property type="match status" value="1"/>
</dbReference>
<dbReference type="Pfam" id="PF08732">
    <property type="entry name" value="HIM1"/>
    <property type="match status" value="1"/>
</dbReference>
<dbReference type="SUPFAM" id="SSF51735">
    <property type="entry name" value="NAD(P)-binding Rossmann-fold domains"/>
    <property type="match status" value="1"/>
</dbReference>
<name>FM521_PICST</name>
<keyword id="KW-0472">Membrane</keyword>
<keyword id="KW-0496">Mitochondrion</keyword>
<keyword id="KW-1000">Mitochondrion outer membrane</keyword>
<keyword id="KW-1185">Reference proteome</keyword>
<keyword id="KW-0809">Transit peptide</keyword>
<feature type="transit peptide" description="Mitochondrion">
    <location>
        <begin position="1"/>
        <end position="43"/>
    </location>
</feature>
<feature type="chain" id="PRO_0000301829" description="Protein FMP52-1, mitochondrial">
    <location>
        <begin position="44"/>
        <end position="226"/>
    </location>
</feature>
<organism>
    <name type="scientific">Scheffersomyces stipitis (strain ATCC 58785 / CBS 6054 / NBRC 10063 / NRRL Y-11545)</name>
    <name type="common">Yeast</name>
    <name type="synonym">Pichia stipitis</name>
    <dbReference type="NCBI Taxonomy" id="322104"/>
    <lineage>
        <taxon>Eukaryota</taxon>
        <taxon>Fungi</taxon>
        <taxon>Dikarya</taxon>
        <taxon>Ascomycota</taxon>
        <taxon>Saccharomycotina</taxon>
        <taxon>Pichiomycetes</taxon>
        <taxon>Debaryomycetaceae</taxon>
        <taxon>Scheffersomyces</taxon>
    </lineage>
</organism>
<accession>A3LUX6</accession>